<reference key="1">
    <citation type="journal article" date="2009" name="Appl. Environ. Microbiol.">
        <title>Complete genome sequence of the chemolithoautotrophic marine magnetotactic coccus strain MC-1.</title>
        <authorList>
            <person name="Schubbe S."/>
            <person name="Williams T.J."/>
            <person name="Xie G."/>
            <person name="Kiss H.E."/>
            <person name="Brettin T.S."/>
            <person name="Martinez D."/>
            <person name="Ross C.A."/>
            <person name="Schuler D."/>
            <person name="Cox B.L."/>
            <person name="Nealson K.H."/>
            <person name="Bazylinski D.A."/>
        </authorList>
    </citation>
    <scope>NUCLEOTIDE SEQUENCE [LARGE SCALE GENOMIC DNA]</scope>
    <source>
        <strain>ATCC BAA-1437 / JCM 17883 / MC-1</strain>
    </source>
</reference>
<proteinExistence type="inferred from homology"/>
<comment type="function">
    <text evidence="1">Required for the insertion and/or proper folding and/or complex formation of integral membrane proteins into the membrane. Involved in integration of membrane proteins that insert both dependently and independently of the Sec translocase complex, as well as at least some lipoproteins. Aids folding of multispanning membrane proteins.</text>
</comment>
<comment type="subunit">
    <text evidence="1">Interacts with the Sec translocase complex via SecD. Specifically interacts with transmembrane segments of nascent integral membrane proteins during membrane integration.</text>
</comment>
<comment type="subcellular location">
    <subcellularLocation>
        <location evidence="1">Cell inner membrane</location>
        <topology evidence="1">Multi-pass membrane protein</topology>
    </subcellularLocation>
</comment>
<comment type="similarity">
    <text evidence="1">Belongs to the OXA1/ALB3/YidC family. Type 1 subfamily.</text>
</comment>
<keyword id="KW-0997">Cell inner membrane</keyword>
<keyword id="KW-1003">Cell membrane</keyword>
<keyword id="KW-0143">Chaperone</keyword>
<keyword id="KW-0472">Membrane</keyword>
<keyword id="KW-0653">Protein transport</keyword>
<keyword id="KW-1185">Reference proteome</keyword>
<keyword id="KW-0812">Transmembrane</keyword>
<keyword id="KW-1133">Transmembrane helix</keyword>
<keyword id="KW-0813">Transport</keyword>
<sequence length="556" mass="62317">MDRRTLTAIVLSFVLLTAFQFYMAWKYPPAELTGEQVQSGESSAPAPLASTAPVADALPPPVEGMAGSAPQQAMSQPLINTDAKSLLHFKNDLVEGSLSLQGGRLVGMDFLQHTDVLGGKPISFMGISQVESFYQESGFLPVAGSAIKAPDANTQWQLIGKESLQGAGEFKLVWDNGEGIVFEKLFSFAQGSYLFKVEDRLINNSAAALGVYHYSQFKRIPVINSQSMLAMSDFQGPMAYLNGERYQHSYEDLTAQDLREKGHGGWTGFSDKYFLAAMVAKPLPPEAQPRRYYFDYDRPNYRVGMVENSVIIPAGQSLAVDYDLFIGPKEISTLERSNLSLERSIDYGWFHFLAEPLVKVLNFFNSVVHNYGVAIILLTLAIKLLFFPLANKSYRSMNAMKKLQPKIEELKKLHGSDRNKMNEAMMKLYQTHKVNPLGGCLPILVQIPVFFALYKVLFLSVEMRHAPFMLWIPDLSAMDPFYVLPLLMGGSMFLQSKLNPTPSDPMQAKIMMFLPVIFTVMFLSFPSGLVLYWLVNNVLSISQQYYIMKKMEHEPS</sequence>
<gene>
    <name evidence="1" type="primary">yidC</name>
    <name type="ordered locus">Mmc1_3757</name>
</gene>
<accession>A0LE49</accession>
<evidence type="ECO:0000255" key="1">
    <source>
        <dbReference type="HAMAP-Rule" id="MF_01810"/>
    </source>
</evidence>
<evidence type="ECO:0000256" key="2">
    <source>
        <dbReference type="SAM" id="MobiDB-lite"/>
    </source>
</evidence>
<feature type="chain" id="PRO_1000070118" description="Membrane protein insertase YidC">
    <location>
        <begin position="1"/>
        <end position="556"/>
    </location>
</feature>
<feature type="transmembrane region" description="Helical" evidence="1">
    <location>
        <begin position="5"/>
        <end position="25"/>
    </location>
</feature>
<feature type="transmembrane region" description="Helical" evidence="1">
    <location>
        <begin position="370"/>
        <end position="390"/>
    </location>
</feature>
<feature type="transmembrane region" description="Helical" evidence="1">
    <location>
        <begin position="441"/>
        <end position="461"/>
    </location>
</feature>
<feature type="transmembrane region" description="Helical" evidence="1">
    <location>
        <begin position="468"/>
        <end position="488"/>
    </location>
</feature>
<feature type="transmembrane region" description="Helical" evidence="1">
    <location>
        <begin position="510"/>
        <end position="530"/>
    </location>
</feature>
<feature type="region of interest" description="Disordered" evidence="2">
    <location>
        <begin position="36"/>
        <end position="74"/>
    </location>
</feature>
<feature type="compositionally biased region" description="Low complexity" evidence="2">
    <location>
        <begin position="42"/>
        <end position="55"/>
    </location>
</feature>
<protein>
    <recommendedName>
        <fullName evidence="1">Membrane protein insertase YidC</fullName>
    </recommendedName>
    <alternativeName>
        <fullName evidence="1">Foldase YidC</fullName>
    </alternativeName>
    <alternativeName>
        <fullName evidence="1">Membrane integrase YidC</fullName>
    </alternativeName>
    <alternativeName>
        <fullName evidence="1">Membrane protein YidC</fullName>
    </alternativeName>
</protein>
<name>YIDC_MAGMM</name>
<organism>
    <name type="scientific">Magnetococcus marinus (strain ATCC BAA-1437 / JCM 17883 / MC-1)</name>
    <dbReference type="NCBI Taxonomy" id="156889"/>
    <lineage>
        <taxon>Bacteria</taxon>
        <taxon>Pseudomonadati</taxon>
        <taxon>Pseudomonadota</taxon>
        <taxon>Alphaproteobacteria</taxon>
        <taxon>Magnetococcales</taxon>
        <taxon>Magnetococcaceae</taxon>
        <taxon>Magnetococcus</taxon>
    </lineage>
</organism>
<dbReference type="EMBL" id="CP000471">
    <property type="protein sequence ID" value="ABK46242.1"/>
    <property type="molecule type" value="Genomic_DNA"/>
</dbReference>
<dbReference type="RefSeq" id="WP_011715294.1">
    <property type="nucleotide sequence ID" value="NC_008576.1"/>
</dbReference>
<dbReference type="SMR" id="A0LE49"/>
<dbReference type="STRING" id="156889.Mmc1_3757"/>
<dbReference type="KEGG" id="mgm:Mmc1_3757"/>
<dbReference type="eggNOG" id="COG0706">
    <property type="taxonomic scope" value="Bacteria"/>
</dbReference>
<dbReference type="HOGENOM" id="CLU_016535_3_0_5"/>
<dbReference type="OrthoDB" id="9780552at2"/>
<dbReference type="Proteomes" id="UP000002586">
    <property type="component" value="Chromosome"/>
</dbReference>
<dbReference type="GO" id="GO:0005886">
    <property type="term" value="C:plasma membrane"/>
    <property type="evidence" value="ECO:0007669"/>
    <property type="project" value="UniProtKB-SubCell"/>
</dbReference>
<dbReference type="GO" id="GO:0032977">
    <property type="term" value="F:membrane insertase activity"/>
    <property type="evidence" value="ECO:0007669"/>
    <property type="project" value="InterPro"/>
</dbReference>
<dbReference type="GO" id="GO:0051205">
    <property type="term" value="P:protein insertion into membrane"/>
    <property type="evidence" value="ECO:0007669"/>
    <property type="project" value="TreeGrafter"/>
</dbReference>
<dbReference type="GO" id="GO:0015031">
    <property type="term" value="P:protein transport"/>
    <property type="evidence" value="ECO:0007669"/>
    <property type="project" value="UniProtKB-KW"/>
</dbReference>
<dbReference type="CDD" id="cd20070">
    <property type="entry name" value="5TM_YidC_Alb3"/>
    <property type="match status" value="1"/>
</dbReference>
<dbReference type="CDD" id="cd19961">
    <property type="entry name" value="EcYidC-like_peri"/>
    <property type="match status" value="1"/>
</dbReference>
<dbReference type="Gene3D" id="2.70.98.90">
    <property type="match status" value="1"/>
</dbReference>
<dbReference type="HAMAP" id="MF_01810">
    <property type="entry name" value="YidC_type1"/>
    <property type="match status" value="1"/>
</dbReference>
<dbReference type="InterPro" id="IPR019998">
    <property type="entry name" value="Membr_insert_YidC"/>
</dbReference>
<dbReference type="InterPro" id="IPR028053">
    <property type="entry name" value="Membr_insert_YidC_N"/>
</dbReference>
<dbReference type="InterPro" id="IPR001708">
    <property type="entry name" value="YidC/ALB3/OXA1/COX18"/>
</dbReference>
<dbReference type="InterPro" id="IPR028055">
    <property type="entry name" value="YidC/Oxa/ALB_C"/>
</dbReference>
<dbReference type="InterPro" id="IPR047196">
    <property type="entry name" value="YidC_ALB_C"/>
</dbReference>
<dbReference type="InterPro" id="IPR038221">
    <property type="entry name" value="YidC_periplasmic_sf"/>
</dbReference>
<dbReference type="NCBIfam" id="NF002352">
    <property type="entry name" value="PRK01318.1-3"/>
    <property type="match status" value="1"/>
</dbReference>
<dbReference type="NCBIfam" id="NF002353">
    <property type="entry name" value="PRK01318.1-4"/>
    <property type="match status" value="1"/>
</dbReference>
<dbReference type="NCBIfam" id="TIGR03593">
    <property type="entry name" value="yidC_nterm"/>
    <property type="match status" value="1"/>
</dbReference>
<dbReference type="NCBIfam" id="TIGR03592">
    <property type="entry name" value="yidC_oxa1_cterm"/>
    <property type="match status" value="1"/>
</dbReference>
<dbReference type="PANTHER" id="PTHR12428:SF65">
    <property type="entry name" value="CYTOCHROME C OXIDASE ASSEMBLY PROTEIN COX18, MITOCHONDRIAL"/>
    <property type="match status" value="1"/>
</dbReference>
<dbReference type="PANTHER" id="PTHR12428">
    <property type="entry name" value="OXA1"/>
    <property type="match status" value="1"/>
</dbReference>
<dbReference type="Pfam" id="PF02096">
    <property type="entry name" value="60KD_IMP"/>
    <property type="match status" value="1"/>
</dbReference>
<dbReference type="Pfam" id="PF14849">
    <property type="entry name" value="YidC_periplas"/>
    <property type="match status" value="1"/>
</dbReference>
<dbReference type="PRINTS" id="PR00701">
    <property type="entry name" value="60KDINNERMP"/>
</dbReference>
<dbReference type="PRINTS" id="PR01900">
    <property type="entry name" value="YIDCPROTEIN"/>
</dbReference>